<gene>
    <name evidence="4" type="ORF">IscW_ISCW009460</name>
</gene>
<comment type="function">
    <text evidence="1">Tick salivary platelet aggregation inhibitor that plays an important part in the anti-hemostatic strategy of ticks. Inhibits platelet aggregation induced by ADP, thrombin and thromboxane A2 (TXA2). Blocks platelet adhesion to soluble collagen (most probably through the binding to alpha-2/beta-1 integrin (ITGA2/ITGB1)) and binds to purified glycoprotein IIb/IIIa (ITGA2B/ITGB3) in a dose-dependent manner. In vivo, reduces thrombus weight effectively in a rat arteriovenous shunt model and inhibits thrombosis in a carrageenan-induced mouse tail thrombosis model.</text>
</comment>
<comment type="subcellular location">
    <subcellularLocation>
        <location evidence="1">Secreted</location>
    </subcellularLocation>
</comment>
<comment type="tissue specificity">
    <text evidence="1">Expressed in salivary glands.</text>
</comment>
<comment type="PTM">
    <text evidence="1">Contains 3 disulfide bonds.</text>
</comment>
<comment type="similarity">
    <text evidence="3">Belongs to the ixodegrin family.</text>
</comment>
<feature type="signal peptide" evidence="2">
    <location>
        <begin position="1"/>
        <end position="19"/>
    </location>
</feature>
<feature type="chain" id="PRO_5010826538" description="Ixodegrin-like peptide">
    <location>
        <begin position="20"/>
        <end position="60"/>
    </location>
</feature>
<feature type="short sequence motif" description="Cell attachment site" evidence="1">
    <location>
        <begin position="49"/>
        <end position="51"/>
    </location>
</feature>
<keyword id="KW-1015">Disulfide bond</keyword>
<keyword id="KW-1199">Hemostasis impairing toxin</keyword>
<keyword id="KW-1201">Platelet aggregation inhibiting toxin</keyword>
<keyword id="KW-1185">Reference proteome</keyword>
<keyword id="KW-0964">Secreted</keyword>
<keyword id="KW-0732">Signal</keyword>
<keyword id="KW-0800">Toxin</keyword>
<name>IXOP_IXOSC</name>
<evidence type="ECO:0000250" key="1">
    <source>
        <dbReference type="UniProtKB" id="Q4PMW1"/>
    </source>
</evidence>
<evidence type="ECO:0000255" key="2"/>
<evidence type="ECO:0000305" key="3"/>
<evidence type="ECO:0000312" key="4">
    <source>
        <dbReference type="EMBL" id="EEC12224.1"/>
    </source>
</evidence>
<evidence type="ECO:0000312" key="5">
    <source>
        <dbReference type="Proteomes" id="UP000001555"/>
    </source>
</evidence>
<reference evidence="4 5" key="1">
    <citation type="submission" date="2008-03" db="EMBL/GenBank/DDBJ databases">
        <title>Annotation of Ixodes scapularis.</title>
        <authorList>
            <consortium name="Ixodes scapularis Genome Project Consortium"/>
            <person name="Caler E."/>
            <person name="Hannick L.I."/>
            <person name="Bidwell S."/>
            <person name="Joardar V."/>
            <person name="Thiagarajan M."/>
            <person name="Amedeo P."/>
            <person name="Galinsky K.J."/>
            <person name="Schobel S."/>
            <person name="Inman J."/>
            <person name="Hostetler J."/>
            <person name="Miller J."/>
            <person name="Hammond M."/>
            <person name="Megy K."/>
            <person name="Lawson D."/>
            <person name="Kodira C."/>
            <person name="Sutton G."/>
            <person name="Meyer J."/>
            <person name="Hill C.A."/>
            <person name="Birren B."/>
            <person name="Nene V."/>
            <person name="Collins F."/>
            <person name="Alarcon-Chaidez F."/>
            <person name="Wikel S."/>
            <person name="Strausberg R."/>
        </authorList>
    </citation>
    <scope>NUCLEOTIDE SEQUENCE [LARGE SCALE GENOMIC DNA]</scope>
    <source>
        <strain>Wikel</strain>
    </source>
</reference>
<sequence>MNAVFIAALLILGTSTFDAMRLWNYCTHILCTNDSDCGQSDSCRCRPPRGDDYRYHCSRY</sequence>
<dbReference type="EMBL" id="ABJB010256642">
    <property type="status" value="NOT_ANNOTATED_CDS"/>
    <property type="molecule type" value="Genomic_DNA"/>
</dbReference>
<dbReference type="EMBL" id="DS829927">
    <property type="protein sequence ID" value="EEC12224.1"/>
    <property type="molecule type" value="Genomic_DNA"/>
</dbReference>
<dbReference type="RefSeq" id="XP_002406885.1">
    <property type="nucleotide sequence ID" value="XM_002406841.1"/>
</dbReference>
<dbReference type="PaxDb" id="6945-B7Q052"/>
<dbReference type="EnsemblMetazoa" id="ISCI009460-RA">
    <property type="protein sequence ID" value="ISCI009460-PA"/>
    <property type="gene ID" value="ISCI009460"/>
</dbReference>
<dbReference type="EnsemblMetazoa" id="ISCW009460-RA">
    <property type="protein sequence ID" value="ISCW009460-PA"/>
    <property type="gene ID" value="ISCW009460"/>
</dbReference>
<dbReference type="VEuPathDB" id="VectorBase:ISCI009460"/>
<dbReference type="VEuPathDB" id="VectorBase:ISCW009460"/>
<dbReference type="HOGENOM" id="CLU_2944257_0_0_1"/>
<dbReference type="InParanoid" id="B7Q052"/>
<dbReference type="Proteomes" id="UP000001555">
    <property type="component" value="Unassembled WGS sequence"/>
</dbReference>
<dbReference type="GO" id="GO:0005576">
    <property type="term" value="C:extracellular region"/>
    <property type="evidence" value="ECO:0007669"/>
    <property type="project" value="UniProtKB-SubCell"/>
</dbReference>
<dbReference type="GO" id="GO:0090729">
    <property type="term" value="F:toxin activity"/>
    <property type="evidence" value="ECO:0007669"/>
    <property type="project" value="UniProtKB-KW"/>
</dbReference>
<protein>
    <recommendedName>
        <fullName evidence="3">Ixodegrin-like peptide</fullName>
    </recommendedName>
    <alternativeName>
        <fullName evidence="1">Platelet aggregation inhibitor</fullName>
        <shortName evidence="1">PAI</shortName>
    </alternativeName>
    <alternativeName>
        <fullName evidence="1">Tick anti-thrombosis peptide</fullName>
    </alternativeName>
</protein>
<accession>B7Q052</accession>
<proteinExistence type="inferred from homology"/>
<organism>
    <name type="scientific">Ixodes scapularis</name>
    <name type="common">Black-legged tick</name>
    <name type="synonym">Deer tick</name>
    <dbReference type="NCBI Taxonomy" id="6945"/>
    <lineage>
        <taxon>Eukaryota</taxon>
        <taxon>Metazoa</taxon>
        <taxon>Ecdysozoa</taxon>
        <taxon>Arthropoda</taxon>
        <taxon>Chelicerata</taxon>
        <taxon>Arachnida</taxon>
        <taxon>Acari</taxon>
        <taxon>Parasitiformes</taxon>
        <taxon>Ixodida</taxon>
        <taxon>Ixodoidea</taxon>
        <taxon>Ixodidae</taxon>
        <taxon>Ixodinae</taxon>
        <taxon>Ixodes</taxon>
    </lineage>
</organism>